<comment type="miscellaneous">
    <text>This chain was isolated from a myeloma protein that binds inulin.</text>
</comment>
<accession>P01799</accession>
<proteinExistence type="evidence at protein level"/>
<feature type="chain" id="PRO_0000059884" description="Ig heavy chain V-III region ABE-47N">
    <location>
        <begin position="1"/>
        <end position="113" status="greater than"/>
    </location>
</feature>
<feature type="domain" description="Ig-like">
    <location>
        <begin position="1"/>
        <end position="113" status="greater than"/>
    </location>
</feature>
<feature type="disulfide bond" evidence="1">
    <location>
        <begin position="22"/>
        <end position="98"/>
    </location>
</feature>
<feature type="non-terminal residue">
    <location>
        <position position="113"/>
    </location>
</feature>
<name>HVM30_MOUSE</name>
<reference key="1">
    <citation type="journal article" date="1977" name="Biochemistry">
        <title>Heavy-chain variable-region sequence from an inulin-binding myeloma protein.</title>
        <authorList>
            <person name="Vrana M."/>
            <person name="Rudikoff S."/>
            <person name="Potter M."/>
        </authorList>
    </citation>
    <scope>PROTEIN SEQUENCE</scope>
</reference>
<sequence length="113" mass="12675">EVKLEESGGGLVQPGGSMKLSCVASGFTFSNYWMNWVRQSPEKGLEWVAEIRLKSHNYATHYAESVKGRFTISRDDSKSSVYLQMNNLRAEDTAIYYCSTGFAYWGQGTLVTV</sequence>
<protein>
    <recommendedName>
        <fullName>Ig heavy chain V-III region ABE-47N</fullName>
    </recommendedName>
</protein>
<keyword id="KW-1064">Adaptive immunity</keyword>
<keyword id="KW-0903">Direct protein sequencing</keyword>
<keyword id="KW-1015">Disulfide bond</keyword>
<keyword id="KW-0391">Immunity</keyword>
<keyword id="KW-1280">Immunoglobulin</keyword>
<keyword id="KW-1185">Reference proteome</keyword>
<dbReference type="PIR" id="A90400">
    <property type="entry name" value="AVMSB7"/>
</dbReference>
<dbReference type="SMR" id="P01799"/>
<dbReference type="FunCoup" id="P01799">
    <property type="interactions" value="539"/>
</dbReference>
<dbReference type="InParanoid" id="P01799"/>
<dbReference type="Proteomes" id="UP000000589">
    <property type="component" value="Unplaced"/>
</dbReference>
<dbReference type="RNAct" id="P01799">
    <property type="molecule type" value="protein"/>
</dbReference>
<dbReference type="GO" id="GO:0005576">
    <property type="term" value="C:extracellular region"/>
    <property type="evidence" value="ECO:0007669"/>
    <property type="project" value="UniProtKB-ARBA"/>
</dbReference>
<dbReference type="GO" id="GO:0019814">
    <property type="term" value="C:immunoglobulin complex"/>
    <property type="evidence" value="ECO:0007669"/>
    <property type="project" value="UniProtKB-KW"/>
</dbReference>
<dbReference type="GO" id="GO:0003823">
    <property type="term" value="F:antigen binding"/>
    <property type="evidence" value="ECO:0000318"/>
    <property type="project" value="GO_Central"/>
</dbReference>
<dbReference type="GO" id="GO:0016064">
    <property type="term" value="P:immunoglobulin mediated immune response"/>
    <property type="evidence" value="ECO:0000318"/>
    <property type="project" value="GO_Central"/>
</dbReference>
<dbReference type="CDD" id="cd04981">
    <property type="entry name" value="IgV_H"/>
    <property type="match status" value="1"/>
</dbReference>
<dbReference type="FunFam" id="2.60.40.10:FF:001372">
    <property type="entry name" value="Ig heavy chain V region M603"/>
    <property type="match status" value="1"/>
</dbReference>
<dbReference type="Gene3D" id="2.60.40.10">
    <property type="entry name" value="Immunoglobulins"/>
    <property type="match status" value="1"/>
</dbReference>
<dbReference type="InterPro" id="IPR007110">
    <property type="entry name" value="Ig-like_dom"/>
</dbReference>
<dbReference type="InterPro" id="IPR036179">
    <property type="entry name" value="Ig-like_dom_sf"/>
</dbReference>
<dbReference type="InterPro" id="IPR013783">
    <property type="entry name" value="Ig-like_fold"/>
</dbReference>
<dbReference type="InterPro" id="IPR003599">
    <property type="entry name" value="Ig_sub"/>
</dbReference>
<dbReference type="InterPro" id="IPR013106">
    <property type="entry name" value="Ig_V-set"/>
</dbReference>
<dbReference type="InterPro" id="IPR050199">
    <property type="entry name" value="IgHV"/>
</dbReference>
<dbReference type="PANTHER" id="PTHR23266">
    <property type="entry name" value="IMMUNOGLOBULIN HEAVY CHAIN"/>
    <property type="match status" value="1"/>
</dbReference>
<dbReference type="Pfam" id="PF07686">
    <property type="entry name" value="V-set"/>
    <property type="match status" value="1"/>
</dbReference>
<dbReference type="SMART" id="SM00409">
    <property type="entry name" value="IG"/>
    <property type="match status" value="1"/>
</dbReference>
<dbReference type="SMART" id="SM00406">
    <property type="entry name" value="IGv"/>
    <property type="match status" value="1"/>
</dbReference>
<dbReference type="SUPFAM" id="SSF48726">
    <property type="entry name" value="Immunoglobulin"/>
    <property type="match status" value="1"/>
</dbReference>
<dbReference type="PROSITE" id="PS50835">
    <property type="entry name" value="IG_LIKE"/>
    <property type="match status" value="1"/>
</dbReference>
<evidence type="ECO:0000255" key="1">
    <source>
        <dbReference type="PROSITE-ProRule" id="PRU00114"/>
    </source>
</evidence>
<organism>
    <name type="scientific">Mus musculus</name>
    <name type="common">Mouse</name>
    <dbReference type="NCBI Taxonomy" id="10090"/>
    <lineage>
        <taxon>Eukaryota</taxon>
        <taxon>Metazoa</taxon>
        <taxon>Chordata</taxon>
        <taxon>Craniata</taxon>
        <taxon>Vertebrata</taxon>
        <taxon>Euteleostomi</taxon>
        <taxon>Mammalia</taxon>
        <taxon>Eutheria</taxon>
        <taxon>Euarchontoglires</taxon>
        <taxon>Glires</taxon>
        <taxon>Rodentia</taxon>
        <taxon>Myomorpha</taxon>
        <taxon>Muroidea</taxon>
        <taxon>Muridae</taxon>
        <taxon>Murinae</taxon>
        <taxon>Mus</taxon>
        <taxon>Mus</taxon>
    </lineage>
</organism>